<comment type="function">
    <text evidence="1">Required for accurate and efficient protein synthesis under certain stress conditions. May act as a fidelity factor of the translation reaction, by catalyzing a one-codon backward translocation of tRNAs on improperly translocated ribosomes. Back-translocation proceeds from a post-translocation (POST) complex to a pre-translocation (PRE) complex, thus giving elongation factor G a second chance to translocate the tRNAs correctly. Binds to ribosomes in a GTP-dependent manner.</text>
</comment>
<comment type="catalytic activity">
    <reaction evidence="1">
        <text>GTP + H2O = GDP + phosphate + H(+)</text>
        <dbReference type="Rhea" id="RHEA:19669"/>
        <dbReference type="ChEBI" id="CHEBI:15377"/>
        <dbReference type="ChEBI" id="CHEBI:15378"/>
        <dbReference type="ChEBI" id="CHEBI:37565"/>
        <dbReference type="ChEBI" id="CHEBI:43474"/>
        <dbReference type="ChEBI" id="CHEBI:58189"/>
        <dbReference type="EC" id="3.6.5.n1"/>
    </reaction>
</comment>
<comment type="subcellular location">
    <subcellularLocation>
        <location evidence="1">Cell inner membrane</location>
        <topology evidence="1">Peripheral membrane protein</topology>
        <orientation evidence="1">Cytoplasmic side</orientation>
    </subcellularLocation>
</comment>
<comment type="similarity">
    <text evidence="1">Belongs to the TRAFAC class translation factor GTPase superfamily. Classic translation factor GTPase family. LepA subfamily.</text>
</comment>
<accession>A4WX88</accession>
<feature type="chain" id="PRO_1000032044" description="Elongation factor 4">
    <location>
        <begin position="1"/>
        <end position="599"/>
    </location>
</feature>
<feature type="domain" description="tr-type G">
    <location>
        <begin position="5"/>
        <end position="187"/>
    </location>
</feature>
<feature type="binding site" evidence="1">
    <location>
        <begin position="17"/>
        <end position="22"/>
    </location>
    <ligand>
        <name>GTP</name>
        <dbReference type="ChEBI" id="CHEBI:37565"/>
    </ligand>
</feature>
<feature type="binding site" evidence="1">
    <location>
        <begin position="134"/>
        <end position="137"/>
    </location>
    <ligand>
        <name>GTP</name>
        <dbReference type="ChEBI" id="CHEBI:37565"/>
    </ligand>
</feature>
<dbReference type="EC" id="3.6.5.n1" evidence="1"/>
<dbReference type="EMBL" id="CP000661">
    <property type="protein sequence ID" value="ABP72002.1"/>
    <property type="molecule type" value="Genomic_DNA"/>
</dbReference>
<dbReference type="SMR" id="A4WX88"/>
<dbReference type="STRING" id="349102.Rsph17025_3118"/>
<dbReference type="KEGG" id="rsq:Rsph17025_3118"/>
<dbReference type="eggNOG" id="COG0481">
    <property type="taxonomic scope" value="Bacteria"/>
</dbReference>
<dbReference type="HOGENOM" id="CLU_009995_3_3_5"/>
<dbReference type="BioCyc" id="RSPH349102:G1G8M-3221-MONOMER"/>
<dbReference type="GO" id="GO:0005886">
    <property type="term" value="C:plasma membrane"/>
    <property type="evidence" value="ECO:0007669"/>
    <property type="project" value="UniProtKB-SubCell"/>
</dbReference>
<dbReference type="GO" id="GO:0005525">
    <property type="term" value="F:GTP binding"/>
    <property type="evidence" value="ECO:0007669"/>
    <property type="project" value="UniProtKB-UniRule"/>
</dbReference>
<dbReference type="GO" id="GO:0003924">
    <property type="term" value="F:GTPase activity"/>
    <property type="evidence" value="ECO:0007669"/>
    <property type="project" value="UniProtKB-UniRule"/>
</dbReference>
<dbReference type="GO" id="GO:0097216">
    <property type="term" value="F:guanosine tetraphosphate binding"/>
    <property type="evidence" value="ECO:0007669"/>
    <property type="project" value="UniProtKB-ARBA"/>
</dbReference>
<dbReference type="GO" id="GO:0043022">
    <property type="term" value="F:ribosome binding"/>
    <property type="evidence" value="ECO:0007669"/>
    <property type="project" value="UniProtKB-UniRule"/>
</dbReference>
<dbReference type="GO" id="GO:0003746">
    <property type="term" value="F:translation elongation factor activity"/>
    <property type="evidence" value="ECO:0007669"/>
    <property type="project" value="UniProtKB-UniRule"/>
</dbReference>
<dbReference type="GO" id="GO:0045727">
    <property type="term" value="P:positive regulation of translation"/>
    <property type="evidence" value="ECO:0007669"/>
    <property type="project" value="UniProtKB-UniRule"/>
</dbReference>
<dbReference type="CDD" id="cd03699">
    <property type="entry name" value="EF4_II"/>
    <property type="match status" value="1"/>
</dbReference>
<dbReference type="CDD" id="cd16260">
    <property type="entry name" value="EF4_III"/>
    <property type="match status" value="1"/>
</dbReference>
<dbReference type="CDD" id="cd01890">
    <property type="entry name" value="LepA"/>
    <property type="match status" value="1"/>
</dbReference>
<dbReference type="CDD" id="cd03709">
    <property type="entry name" value="lepA_C"/>
    <property type="match status" value="1"/>
</dbReference>
<dbReference type="FunFam" id="3.40.50.300:FF:000078">
    <property type="entry name" value="Elongation factor 4"/>
    <property type="match status" value="1"/>
</dbReference>
<dbReference type="FunFam" id="2.40.30.10:FF:000015">
    <property type="entry name" value="Translation factor GUF1, mitochondrial"/>
    <property type="match status" value="1"/>
</dbReference>
<dbReference type="FunFam" id="3.30.70.240:FF:000007">
    <property type="entry name" value="Translation factor GUF1, mitochondrial"/>
    <property type="match status" value="1"/>
</dbReference>
<dbReference type="FunFam" id="3.30.70.2570:FF:000001">
    <property type="entry name" value="Translation factor GUF1, mitochondrial"/>
    <property type="match status" value="1"/>
</dbReference>
<dbReference type="FunFam" id="3.30.70.870:FF:000004">
    <property type="entry name" value="Translation factor GUF1, mitochondrial"/>
    <property type="match status" value="1"/>
</dbReference>
<dbReference type="Gene3D" id="3.30.70.240">
    <property type="match status" value="1"/>
</dbReference>
<dbReference type="Gene3D" id="3.30.70.2570">
    <property type="entry name" value="Elongation factor 4, C-terminal domain"/>
    <property type="match status" value="1"/>
</dbReference>
<dbReference type="Gene3D" id="3.30.70.870">
    <property type="entry name" value="Elongation Factor G (Translational Gtpase), domain 3"/>
    <property type="match status" value="1"/>
</dbReference>
<dbReference type="Gene3D" id="3.40.50.300">
    <property type="entry name" value="P-loop containing nucleotide triphosphate hydrolases"/>
    <property type="match status" value="1"/>
</dbReference>
<dbReference type="Gene3D" id="2.40.30.10">
    <property type="entry name" value="Translation factors"/>
    <property type="match status" value="1"/>
</dbReference>
<dbReference type="HAMAP" id="MF_00071">
    <property type="entry name" value="LepA"/>
    <property type="match status" value="1"/>
</dbReference>
<dbReference type="InterPro" id="IPR006297">
    <property type="entry name" value="EF-4"/>
</dbReference>
<dbReference type="InterPro" id="IPR035647">
    <property type="entry name" value="EFG_III/V"/>
</dbReference>
<dbReference type="InterPro" id="IPR000640">
    <property type="entry name" value="EFG_V-like"/>
</dbReference>
<dbReference type="InterPro" id="IPR004161">
    <property type="entry name" value="EFTu-like_2"/>
</dbReference>
<dbReference type="InterPro" id="IPR031157">
    <property type="entry name" value="G_TR_CS"/>
</dbReference>
<dbReference type="InterPro" id="IPR038363">
    <property type="entry name" value="LepA_C_sf"/>
</dbReference>
<dbReference type="InterPro" id="IPR013842">
    <property type="entry name" value="LepA_CTD"/>
</dbReference>
<dbReference type="InterPro" id="IPR035654">
    <property type="entry name" value="LepA_IV"/>
</dbReference>
<dbReference type="InterPro" id="IPR027417">
    <property type="entry name" value="P-loop_NTPase"/>
</dbReference>
<dbReference type="InterPro" id="IPR005225">
    <property type="entry name" value="Small_GTP-bd"/>
</dbReference>
<dbReference type="InterPro" id="IPR000795">
    <property type="entry name" value="T_Tr_GTP-bd_dom"/>
</dbReference>
<dbReference type="NCBIfam" id="TIGR01393">
    <property type="entry name" value="lepA"/>
    <property type="match status" value="1"/>
</dbReference>
<dbReference type="NCBIfam" id="TIGR00231">
    <property type="entry name" value="small_GTP"/>
    <property type="match status" value="1"/>
</dbReference>
<dbReference type="PANTHER" id="PTHR43512:SF4">
    <property type="entry name" value="TRANSLATION FACTOR GUF1 HOMOLOG, CHLOROPLASTIC"/>
    <property type="match status" value="1"/>
</dbReference>
<dbReference type="PANTHER" id="PTHR43512">
    <property type="entry name" value="TRANSLATION FACTOR GUF1-RELATED"/>
    <property type="match status" value="1"/>
</dbReference>
<dbReference type="Pfam" id="PF00679">
    <property type="entry name" value="EFG_C"/>
    <property type="match status" value="1"/>
</dbReference>
<dbReference type="Pfam" id="PF00009">
    <property type="entry name" value="GTP_EFTU"/>
    <property type="match status" value="1"/>
</dbReference>
<dbReference type="Pfam" id="PF03144">
    <property type="entry name" value="GTP_EFTU_D2"/>
    <property type="match status" value="1"/>
</dbReference>
<dbReference type="Pfam" id="PF06421">
    <property type="entry name" value="LepA_C"/>
    <property type="match status" value="1"/>
</dbReference>
<dbReference type="PRINTS" id="PR00315">
    <property type="entry name" value="ELONGATNFCT"/>
</dbReference>
<dbReference type="SMART" id="SM00838">
    <property type="entry name" value="EFG_C"/>
    <property type="match status" value="1"/>
</dbReference>
<dbReference type="SUPFAM" id="SSF54980">
    <property type="entry name" value="EF-G C-terminal domain-like"/>
    <property type="match status" value="2"/>
</dbReference>
<dbReference type="SUPFAM" id="SSF52540">
    <property type="entry name" value="P-loop containing nucleoside triphosphate hydrolases"/>
    <property type="match status" value="1"/>
</dbReference>
<dbReference type="PROSITE" id="PS00301">
    <property type="entry name" value="G_TR_1"/>
    <property type="match status" value="1"/>
</dbReference>
<dbReference type="PROSITE" id="PS51722">
    <property type="entry name" value="G_TR_2"/>
    <property type="match status" value="1"/>
</dbReference>
<reference key="1">
    <citation type="submission" date="2007-04" db="EMBL/GenBank/DDBJ databases">
        <title>Complete sequence of chromosome of Rhodobacter sphaeroides ATCC 17025.</title>
        <authorList>
            <consortium name="US DOE Joint Genome Institute"/>
            <person name="Copeland A."/>
            <person name="Lucas S."/>
            <person name="Lapidus A."/>
            <person name="Barry K."/>
            <person name="Detter J.C."/>
            <person name="Glavina del Rio T."/>
            <person name="Hammon N."/>
            <person name="Israni S."/>
            <person name="Dalin E."/>
            <person name="Tice H."/>
            <person name="Pitluck S."/>
            <person name="Chertkov O."/>
            <person name="Brettin T."/>
            <person name="Bruce D."/>
            <person name="Han C."/>
            <person name="Schmutz J."/>
            <person name="Larimer F."/>
            <person name="Land M."/>
            <person name="Hauser L."/>
            <person name="Kyrpides N."/>
            <person name="Kim E."/>
            <person name="Richardson P."/>
            <person name="Mackenzie C."/>
            <person name="Choudhary M."/>
            <person name="Donohue T.J."/>
            <person name="Kaplan S."/>
        </authorList>
    </citation>
    <scope>NUCLEOTIDE SEQUENCE [LARGE SCALE GENOMIC DNA]</scope>
    <source>
        <strain>ATCC 17025 / ATH 2.4.3</strain>
    </source>
</reference>
<name>LEPA_CERS5</name>
<organism>
    <name type="scientific">Cereibacter sphaeroides (strain ATCC 17025 / ATH 2.4.3)</name>
    <name type="common">Rhodobacter sphaeroides</name>
    <dbReference type="NCBI Taxonomy" id="349102"/>
    <lineage>
        <taxon>Bacteria</taxon>
        <taxon>Pseudomonadati</taxon>
        <taxon>Pseudomonadota</taxon>
        <taxon>Alphaproteobacteria</taxon>
        <taxon>Rhodobacterales</taxon>
        <taxon>Paracoccaceae</taxon>
        <taxon>Cereibacter</taxon>
    </lineage>
</organism>
<protein>
    <recommendedName>
        <fullName evidence="1">Elongation factor 4</fullName>
        <shortName evidence="1">EF-4</shortName>
        <ecNumber evidence="1">3.6.5.n1</ecNumber>
    </recommendedName>
    <alternativeName>
        <fullName evidence="1">Ribosomal back-translocase LepA</fullName>
    </alternativeName>
</protein>
<sequence>MTQLDLIRNFSIVAHIDHGKSTLADRLIQLTGTVAERDMKAQILDSMEIERERGITIKANTVRIEYPAKDGKTYVLNLIDTPGHVDFAYEVSRSMRAVEGSLLVVDASQGVEAQTLANVYQALDAGHEIVPVLNKIDLPAAEPDRVRTQIEDVIGLDASDAVLISAKSGLGIPDVLEAIVTRLPPPKGNREAPLKAMLVDSWYDAYLGVVVMIRVMDGVIRKGDRVKMMQTGAVYGIDRLAVLKPQMVDIAELGPGEIGVLTASIKQVRDTRVGDTITHEKKGCEAPLPGFKPAQPVVFCGLFPVDANDFEGLREAIEKLALNDASFTYEMETSAALGFGFRCGFLGLLHLEVVRDRLEREYDLDLITTAPSVVYQIYMRDGTVQELHNPTDMPDLTLVDHIEEPRIRATIMVPDEYLGDVLKLCQDRRGIQLDLSYAGSRAMVVYDLPLNEVVFDFYDRLKSVTKGYASFDYQITGYREDFLVKMSILVNDEPVDALSMMVHRDRADLRGRAMVEKLKELIPRHMFKIPIQAAIGGRVIARETISAMRKDVTAKCYGGDATRKRKLLDKQKAGKKKMRQFGKVEIPQQAFINALKMDS</sequence>
<evidence type="ECO:0000255" key="1">
    <source>
        <dbReference type="HAMAP-Rule" id="MF_00071"/>
    </source>
</evidence>
<gene>
    <name evidence="1" type="primary">lepA</name>
    <name type="ordered locus">Rsph17025_3118</name>
</gene>
<proteinExistence type="inferred from homology"/>
<keyword id="KW-0997">Cell inner membrane</keyword>
<keyword id="KW-1003">Cell membrane</keyword>
<keyword id="KW-0342">GTP-binding</keyword>
<keyword id="KW-0378">Hydrolase</keyword>
<keyword id="KW-0472">Membrane</keyword>
<keyword id="KW-0547">Nucleotide-binding</keyword>
<keyword id="KW-0648">Protein biosynthesis</keyword>